<name>SYY_CERSK</name>
<protein>
    <recommendedName>
        <fullName evidence="1">Tyrosine--tRNA ligase</fullName>
        <ecNumber evidence="1">6.1.1.1</ecNumber>
    </recommendedName>
    <alternativeName>
        <fullName evidence="1">Tyrosyl-tRNA synthetase</fullName>
        <shortName evidence="1">TyrRS</shortName>
    </alternativeName>
</protein>
<keyword id="KW-0030">Aminoacyl-tRNA synthetase</keyword>
<keyword id="KW-0067">ATP-binding</keyword>
<keyword id="KW-0963">Cytoplasm</keyword>
<keyword id="KW-0436">Ligase</keyword>
<keyword id="KW-0547">Nucleotide-binding</keyword>
<keyword id="KW-0648">Protein biosynthesis</keyword>
<keyword id="KW-0694">RNA-binding</keyword>
<gene>
    <name evidence="1" type="primary">tyrS</name>
    <name type="ordered locus">RSKD131_0807</name>
</gene>
<proteinExistence type="inferred from homology"/>
<evidence type="ECO:0000255" key="1">
    <source>
        <dbReference type="HAMAP-Rule" id="MF_02006"/>
    </source>
</evidence>
<sequence length="416" mass="45899">MTYHPKSDFLRVMQERGYLADCTDKQALDEALSKGVVPAYIGYDATAASLHVGHLLNIMMLRWLQKTGHKPITLMGGGTTKVGDPSFRSEERPLLTPDKIDENIEGMRKVFARYLSYGEGATDALMLNNAEWLDHLNYLDFLRDIGRHFSVNRMLSFESVKSRLDREQSLSFLEFNYMILQAYDFLELFRRYGCRLQMGGSDQWGNIVNGIDLTRRVLEGEIFGLTSPLLTTSDGRKMGKSAGGAVWLNGEMLAPYDFWQFWRNTTDADVGRFLKLYTELPVEECDRLGALQGSEINAAKILLANEVTTLLHGRDAAEAAEATARAVFEEGGVGGALEVVELPATTLGEGLSVAHFLVAAGLVASGKEAKRLVAESGLRFNNEPVGDANAPVTAATVGEELKVSIGRKKHKLVRLS</sequence>
<comment type="function">
    <text evidence="1">Catalyzes the attachment of tyrosine to tRNA(Tyr) in a two-step reaction: tyrosine is first activated by ATP to form Tyr-AMP and then transferred to the acceptor end of tRNA(Tyr).</text>
</comment>
<comment type="catalytic activity">
    <reaction evidence="1">
        <text>tRNA(Tyr) + L-tyrosine + ATP = L-tyrosyl-tRNA(Tyr) + AMP + diphosphate + H(+)</text>
        <dbReference type="Rhea" id="RHEA:10220"/>
        <dbReference type="Rhea" id="RHEA-COMP:9706"/>
        <dbReference type="Rhea" id="RHEA-COMP:9707"/>
        <dbReference type="ChEBI" id="CHEBI:15378"/>
        <dbReference type="ChEBI" id="CHEBI:30616"/>
        <dbReference type="ChEBI" id="CHEBI:33019"/>
        <dbReference type="ChEBI" id="CHEBI:58315"/>
        <dbReference type="ChEBI" id="CHEBI:78442"/>
        <dbReference type="ChEBI" id="CHEBI:78536"/>
        <dbReference type="ChEBI" id="CHEBI:456215"/>
        <dbReference type="EC" id="6.1.1.1"/>
    </reaction>
</comment>
<comment type="subunit">
    <text evidence="1">Homodimer.</text>
</comment>
<comment type="subcellular location">
    <subcellularLocation>
        <location evidence="1">Cytoplasm</location>
    </subcellularLocation>
</comment>
<comment type="similarity">
    <text evidence="1">Belongs to the class-I aminoacyl-tRNA synthetase family. TyrS type 1 subfamily.</text>
</comment>
<dbReference type="EC" id="6.1.1.1" evidence="1"/>
<dbReference type="EMBL" id="CP001150">
    <property type="protein sequence ID" value="ACM00667.1"/>
    <property type="molecule type" value="Genomic_DNA"/>
</dbReference>
<dbReference type="RefSeq" id="WP_012643975.1">
    <property type="nucleotide sequence ID" value="NC_011963.1"/>
</dbReference>
<dbReference type="SMR" id="B9KQU0"/>
<dbReference type="GeneID" id="67446250"/>
<dbReference type="KEGG" id="rsk:RSKD131_0807"/>
<dbReference type="HOGENOM" id="CLU_024003_0_3_5"/>
<dbReference type="GO" id="GO:0005829">
    <property type="term" value="C:cytosol"/>
    <property type="evidence" value="ECO:0007669"/>
    <property type="project" value="TreeGrafter"/>
</dbReference>
<dbReference type="GO" id="GO:0005524">
    <property type="term" value="F:ATP binding"/>
    <property type="evidence" value="ECO:0007669"/>
    <property type="project" value="UniProtKB-UniRule"/>
</dbReference>
<dbReference type="GO" id="GO:0003723">
    <property type="term" value="F:RNA binding"/>
    <property type="evidence" value="ECO:0007669"/>
    <property type="project" value="UniProtKB-KW"/>
</dbReference>
<dbReference type="GO" id="GO:0004831">
    <property type="term" value="F:tyrosine-tRNA ligase activity"/>
    <property type="evidence" value="ECO:0007669"/>
    <property type="project" value="UniProtKB-UniRule"/>
</dbReference>
<dbReference type="GO" id="GO:0006437">
    <property type="term" value="P:tyrosyl-tRNA aminoacylation"/>
    <property type="evidence" value="ECO:0007669"/>
    <property type="project" value="UniProtKB-UniRule"/>
</dbReference>
<dbReference type="CDD" id="cd00805">
    <property type="entry name" value="TyrRS_core"/>
    <property type="match status" value="1"/>
</dbReference>
<dbReference type="FunFam" id="1.10.240.10:FF:000001">
    <property type="entry name" value="Tyrosine--tRNA ligase"/>
    <property type="match status" value="1"/>
</dbReference>
<dbReference type="FunFam" id="3.40.50.620:FF:000008">
    <property type="entry name" value="Tyrosine--tRNA ligase"/>
    <property type="match status" value="1"/>
</dbReference>
<dbReference type="Gene3D" id="3.40.50.620">
    <property type="entry name" value="HUPs"/>
    <property type="match status" value="1"/>
</dbReference>
<dbReference type="Gene3D" id="3.10.290.10">
    <property type="entry name" value="RNA-binding S4 domain"/>
    <property type="match status" value="1"/>
</dbReference>
<dbReference type="Gene3D" id="1.10.240.10">
    <property type="entry name" value="Tyrosyl-Transfer RNA Synthetase"/>
    <property type="match status" value="1"/>
</dbReference>
<dbReference type="HAMAP" id="MF_02006">
    <property type="entry name" value="Tyr_tRNA_synth_type1"/>
    <property type="match status" value="1"/>
</dbReference>
<dbReference type="InterPro" id="IPR002305">
    <property type="entry name" value="aa-tRNA-synth_Ic"/>
</dbReference>
<dbReference type="InterPro" id="IPR014729">
    <property type="entry name" value="Rossmann-like_a/b/a_fold"/>
</dbReference>
<dbReference type="InterPro" id="IPR036986">
    <property type="entry name" value="S4_RNA-bd_sf"/>
</dbReference>
<dbReference type="InterPro" id="IPR002307">
    <property type="entry name" value="Tyr-tRNA-ligase"/>
</dbReference>
<dbReference type="InterPro" id="IPR024088">
    <property type="entry name" value="Tyr-tRNA-ligase_bac-type"/>
</dbReference>
<dbReference type="InterPro" id="IPR024107">
    <property type="entry name" value="Tyr-tRNA-ligase_bac_1"/>
</dbReference>
<dbReference type="NCBIfam" id="TIGR00234">
    <property type="entry name" value="tyrS"/>
    <property type="match status" value="1"/>
</dbReference>
<dbReference type="PANTHER" id="PTHR11766:SF0">
    <property type="entry name" value="TYROSINE--TRNA LIGASE, MITOCHONDRIAL"/>
    <property type="match status" value="1"/>
</dbReference>
<dbReference type="PANTHER" id="PTHR11766">
    <property type="entry name" value="TYROSYL-TRNA SYNTHETASE"/>
    <property type="match status" value="1"/>
</dbReference>
<dbReference type="Pfam" id="PF00579">
    <property type="entry name" value="tRNA-synt_1b"/>
    <property type="match status" value="1"/>
</dbReference>
<dbReference type="PRINTS" id="PR01040">
    <property type="entry name" value="TRNASYNTHTYR"/>
</dbReference>
<dbReference type="SUPFAM" id="SSF55174">
    <property type="entry name" value="Alpha-L RNA-binding motif"/>
    <property type="match status" value="1"/>
</dbReference>
<dbReference type="SUPFAM" id="SSF52374">
    <property type="entry name" value="Nucleotidylyl transferase"/>
    <property type="match status" value="1"/>
</dbReference>
<dbReference type="PROSITE" id="PS50889">
    <property type="entry name" value="S4"/>
    <property type="match status" value="1"/>
</dbReference>
<feature type="chain" id="PRO_1000189320" description="Tyrosine--tRNA ligase">
    <location>
        <begin position="1"/>
        <end position="416"/>
    </location>
</feature>
<feature type="domain" description="S4 RNA-binding" evidence="1">
    <location>
        <begin position="351"/>
        <end position="416"/>
    </location>
</feature>
<feature type="short sequence motif" description="'HIGH' region">
    <location>
        <begin position="45"/>
        <end position="54"/>
    </location>
</feature>
<feature type="short sequence motif" description="'KMSKS' region">
    <location>
        <begin position="237"/>
        <end position="241"/>
    </location>
</feature>
<feature type="binding site" evidence="1">
    <location>
        <position position="40"/>
    </location>
    <ligand>
        <name>L-tyrosine</name>
        <dbReference type="ChEBI" id="CHEBI:58315"/>
    </ligand>
</feature>
<feature type="binding site" evidence="1">
    <location>
        <position position="177"/>
    </location>
    <ligand>
        <name>L-tyrosine</name>
        <dbReference type="ChEBI" id="CHEBI:58315"/>
    </ligand>
</feature>
<feature type="binding site" evidence="1">
    <location>
        <position position="181"/>
    </location>
    <ligand>
        <name>L-tyrosine</name>
        <dbReference type="ChEBI" id="CHEBI:58315"/>
    </ligand>
</feature>
<feature type="binding site" evidence="1">
    <location>
        <position position="240"/>
    </location>
    <ligand>
        <name>ATP</name>
        <dbReference type="ChEBI" id="CHEBI:30616"/>
    </ligand>
</feature>
<organism>
    <name type="scientific">Cereibacter sphaeroides (strain KD131 / KCTC 12085)</name>
    <name type="common">Rhodobacter sphaeroides</name>
    <dbReference type="NCBI Taxonomy" id="557760"/>
    <lineage>
        <taxon>Bacteria</taxon>
        <taxon>Pseudomonadati</taxon>
        <taxon>Pseudomonadota</taxon>
        <taxon>Alphaproteobacteria</taxon>
        <taxon>Rhodobacterales</taxon>
        <taxon>Paracoccaceae</taxon>
        <taxon>Cereibacter</taxon>
    </lineage>
</organism>
<accession>B9KQU0</accession>
<reference key="1">
    <citation type="journal article" date="2009" name="J. Bacteriol.">
        <title>Complete genome sequence of Rhodobacter sphaeroides KD131.</title>
        <authorList>
            <person name="Lim S.-K."/>
            <person name="Kim S.J."/>
            <person name="Cha S.H."/>
            <person name="Oh Y.-K."/>
            <person name="Rhee H.-J."/>
            <person name="Kim M.-S."/>
            <person name="Lee J.K."/>
        </authorList>
    </citation>
    <scope>NUCLEOTIDE SEQUENCE [LARGE SCALE GENOMIC DNA]</scope>
    <source>
        <strain>KD131 / KCTC 12085</strain>
    </source>
</reference>